<dbReference type="EMBL" id="CP000685">
    <property type="protein sequence ID" value="ABQ04102.1"/>
    <property type="molecule type" value="Genomic_DNA"/>
</dbReference>
<dbReference type="RefSeq" id="WP_012023154.1">
    <property type="nucleotide sequence ID" value="NZ_MUGZ01000003.1"/>
</dbReference>
<dbReference type="SMR" id="A5FL10"/>
<dbReference type="STRING" id="376686.Fjoh_1069"/>
<dbReference type="KEGG" id="fjo:Fjoh_1069"/>
<dbReference type="eggNOG" id="COG0858">
    <property type="taxonomic scope" value="Bacteria"/>
</dbReference>
<dbReference type="HOGENOM" id="CLU_089475_4_1_10"/>
<dbReference type="OrthoDB" id="9811910at2"/>
<dbReference type="Proteomes" id="UP000006694">
    <property type="component" value="Chromosome"/>
</dbReference>
<dbReference type="GO" id="GO:0005829">
    <property type="term" value="C:cytosol"/>
    <property type="evidence" value="ECO:0007669"/>
    <property type="project" value="TreeGrafter"/>
</dbReference>
<dbReference type="GO" id="GO:0043024">
    <property type="term" value="F:ribosomal small subunit binding"/>
    <property type="evidence" value="ECO:0007669"/>
    <property type="project" value="TreeGrafter"/>
</dbReference>
<dbReference type="GO" id="GO:0030490">
    <property type="term" value="P:maturation of SSU-rRNA"/>
    <property type="evidence" value="ECO:0007669"/>
    <property type="project" value="UniProtKB-UniRule"/>
</dbReference>
<dbReference type="Gene3D" id="3.30.300.20">
    <property type="match status" value="1"/>
</dbReference>
<dbReference type="HAMAP" id="MF_00003">
    <property type="entry name" value="RbfA"/>
    <property type="match status" value="1"/>
</dbReference>
<dbReference type="InterPro" id="IPR015946">
    <property type="entry name" value="KH_dom-like_a/b"/>
</dbReference>
<dbReference type="InterPro" id="IPR000238">
    <property type="entry name" value="RbfA"/>
</dbReference>
<dbReference type="InterPro" id="IPR023799">
    <property type="entry name" value="RbfA_dom_sf"/>
</dbReference>
<dbReference type="NCBIfam" id="TIGR00082">
    <property type="entry name" value="rbfA"/>
    <property type="match status" value="1"/>
</dbReference>
<dbReference type="PANTHER" id="PTHR33515">
    <property type="entry name" value="RIBOSOME-BINDING FACTOR A, CHLOROPLASTIC-RELATED"/>
    <property type="match status" value="1"/>
</dbReference>
<dbReference type="PANTHER" id="PTHR33515:SF1">
    <property type="entry name" value="RIBOSOME-BINDING FACTOR A, CHLOROPLASTIC-RELATED"/>
    <property type="match status" value="1"/>
</dbReference>
<dbReference type="Pfam" id="PF02033">
    <property type="entry name" value="RBFA"/>
    <property type="match status" value="1"/>
</dbReference>
<dbReference type="SUPFAM" id="SSF89919">
    <property type="entry name" value="Ribosome-binding factor A, RbfA"/>
    <property type="match status" value="1"/>
</dbReference>
<name>RBFA_FLAJ1</name>
<comment type="function">
    <text evidence="1">One of several proteins that assist in the late maturation steps of the functional core of the 30S ribosomal subunit. Associates with free 30S ribosomal subunits (but not with 30S subunits that are part of 70S ribosomes or polysomes). Required for efficient processing of 16S rRNA. May interact with the 5'-terminal helix region of 16S rRNA.</text>
</comment>
<comment type="subunit">
    <text evidence="1">Monomer. Binds 30S ribosomal subunits, but not 50S ribosomal subunits or 70S ribosomes.</text>
</comment>
<comment type="subcellular location">
    <subcellularLocation>
        <location evidence="1">Cytoplasm</location>
    </subcellularLocation>
</comment>
<comment type="similarity">
    <text evidence="1">Belongs to the RbfA family.</text>
</comment>
<sequence>METNRQKKIGSVIQKDLVDILQGEVRKNGVSNLVISVSKVSVTSDLSVATVYLSIFPQEKAKETLEGIKSNTTLIKHDLSQRVRLQLRRVPNLVFFIDDSLDYIEKIDNALAGKENPIENRDLLDKRRKS</sequence>
<reference key="1">
    <citation type="journal article" date="2009" name="Appl. Environ. Microbiol.">
        <title>Novel features of the polysaccharide-digesting gliding bacterium Flavobacterium johnsoniae as revealed by genome sequence analysis.</title>
        <authorList>
            <person name="McBride M.J."/>
            <person name="Xie G."/>
            <person name="Martens E.C."/>
            <person name="Lapidus A."/>
            <person name="Henrissat B."/>
            <person name="Rhodes R.G."/>
            <person name="Goltsman E."/>
            <person name="Wang W."/>
            <person name="Xu J."/>
            <person name="Hunnicutt D.W."/>
            <person name="Staroscik A.M."/>
            <person name="Hoover T.R."/>
            <person name="Cheng Y.Q."/>
            <person name="Stein J.L."/>
        </authorList>
    </citation>
    <scope>NUCLEOTIDE SEQUENCE [LARGE SCALE GENOMIC DNA]</scope>
    <source>
        <strain>ATCC 17061 / DSM 2064 / JCM 8514 / BCRC 14874 / CCUG 350202 / NBRC 14942 / NCIMB 11054 / UW101</strain>
    </source>
</reference>
<accession>A5FL10</accession>
<gene>
    <name evidence="1" type="primary">rbfA</name>
    <name type="ordered locus">Fjoh_1069</name>
</gene>
<organism>
    <name type="scientific">Flavobacterium johnsoniae (strain ATCC 17061 / DSM 2064 / JCM 8514 / BCRC 14874 / CCUG 350202 / NBRC 14942 / NCIMB 11054 / UW101)</name>
    <name type="common">Cytophaga johnsonae</name>
    <dbReference type="NCBI Taxonomy" id="376686"/>
    <lineage>
        <taxon>Bacteria</taxon>
        <taxon>Pseudomonadati</taxon>
        <taxon>Bacteroidota</taxon>
        <taxon>Flavobacteriia</taxon>
        <taxon>Flavobacteriales</taxon>
        <taxon>Flavobacteriaceae</taxon>
        <taxon>Flavobacterium</taxon>
    </lineage>
</organism>
<evidence type="ECO:0000255" key="1">
    <source>
        <dbReference type="HAMAP-Rule" id="MF_00003"/>
    </source>
</evidence>
<feature type="chain" id="PRO_1000073762" description="Ribosome-binding factor A">
    <location>
        <begin position="1"/>
        <end position="130"/>
    </location>
</feature>
<protein>
    <recommendedName>
        <fullName evidence="1">Ribosome-binding factor A</fullName>
    </recommendedName>
</protein>
<proteinExistence type="inferred from homology"/>
<keyword id="KW-0963">Cytoplasm</keyword>
<keyword id="KW-0690">Ribosome biogenesis</keyword>